<proteinExistence type="inferred from homology"/>
<feature type="chain" id="PRO_1000064718" description="Ribosome maturation factor RimP">
    <location>
        <begin position="1"/>
        <end position="151"/>
    </location>
</feature>
<reference key="1">
    <citation type="submission" date="2006-12" db="EMBL/GenBank/DDBJ databases">
        <title>Complete sequence of Halorhodospira halophila SL1.</title>
        <authorList>
            <consortium name="US DOE Joint Genome Institute"/>
            <person name="Copeland A."/>
            <person name="Lucas S."/>
            <person name="Lapidus A."/>
            <person name="Barry K."/>
            <person name="Detter J.C."/>
            <person name="Glavina del Rio T."/>
            <person name="Hammon N."/>
            <person name="Israni S."/>
            <person name="Dalin E."/>
            <person name="Tice H."/>
            <person name="Pitluck S."/>
            <person name="Saunders E."/>
            <person name="Brettin T."/>
            <person name="Bruce D."/>
            <person name="Han C."/>
            <person name="Tapia R."/>
            <person name="Schmutz J."/>
            <person name="Larimer F."/>
            <person name="Land M."/>
            <person name="Hauser L."/>
            <person name="Kyrpides N."/>
            <person name="Mikhailova N."/>
            <person name="Hoff W."/>
            <person name="Richardson P."/>
        </authorList>
    </citation>
    <scope>NUCLEOTIDE SEQUENCE [LARGE SCALE GENOMIC DNA]</scope>
    <source>
        <strain>DSM 244 / SL1</strain>
    </source>
</reference>
<organism>
    <name type="scientific">Halorhodospira halophila (strain DSM 244 / SL1)</name>
    <name type="common">Ectothiorhodospira halophila (strain DSM 244 / SL1)</name>
    <dbReference type="NCBI Taxonomy" id="349124"/>
    <lineage>
        <taxon>Bacteria</taxon>
        <taxon>Pseudomonadati</taxon>
        <taxon>Pseudomonadota</taxon>
        <taxon>Gammaproteobacteria</taxon>
        <taxon>Chromatiales</taxon>
        <taxon>Ectothiorhodospiraceae</taxon>
        <taxon>Halorhodospira</taxon>
    </lineage>
</organism>
<dbReference type="EMBL" id="CP000544">
    <property type="protein sequence ID" value="ABM62515.1"/>
    <property type="molecule type" value="Genomic_DNA"/>
</dbReference>
<dbReference type="RefSeq" id="WP_011814537.1">
    <property type="nucleotide sequence ID" value="NC_008789.1"/>
</dbReference>
<dbReference type="SMR" id="A1WXV3"/>
<dbReference type="STRING" id="349124.Hhal_1751"/>
<dbReference type="KEGG" id="hha:Hhal_1751"/>
<dbReference type="eggNOG" id="COG0779">
    <property type="taxonomic scope" value="Bacteria"/>
</dbReference>
<dbReference type="HOGENOM" id="CLU_070525_1_1_6"/>
<dbReference type="OrthoDB" id="9805006at2"/>
<dbReference type="Proteomes" id="UP000000647">
    <property type="component" value="Chromosome"/>
</dbReference>
<dbReference type="GO" id="GO:0005829">
    <property type="term" value="C:cytosol"/>
    <property type="evidence" value="ECO:0007669"/>
    <property type="project" value="TreeGrafter"/>
</dbReference>
<dbReference type="GO" id="GO:0000028">
    <property type="term" value="P:ribosomal small subunit assembly"/>
    <property type="evidence" value="ECO:0007669"/>
    <property type="project" value="TreeGrafter"/>
</dbReference>
<dbReference type="GO" id="GO:0006412">
    <property type="term" value="P:translation"/>
    <property type="evidence" value="ECO:0007669"/>
    <property type="project" value="TreeGrafter"/>
</dbReference>
<dbReference type="CDD" id="cd01734">
    <property type="entry name" value="YlxS_C"/>
    <property type="match status" value="1"/>
</dbReference>
<dbReference type="FunFam" id="3.30.300.70:FF:000001">
    <property type="entry name" value="Ribosome maturation factor RimP"/>
    <property type="match status" value="1"/>
</dbReference>
<dbReference type="Gene3D" id="2.30.30.180">
    <property type="entry name" value="Ribosome maturation factor RimP, C-terminal domain"/>
    <property type="match status" value="1"/>
</dbReference>
<dbReference type="Gene3D" id="3.30.300.70">
    <property type="entry name" value="RimP-like superfamily, N-terminal"/>
    <property type="match status" value="1"/>
</dbReference>
<dbReference type="HAMAP" id="MF_01077">
    <property type="entry name" value="RimP"/>
    <property type="match status" value="1"/>
</dbReference>
<dbReference type="InterPro" id="IPR003728">
    <property type="entry name" value="Ribosome_maturation_RimP"/>
</dbReference>
<dbReference type="InterPro" id="IPR028998">
    <property type="entry name" value="RimP_C"/>
</dbReference>
<dbReference type="InterPro" id="IPR036847">
    <property type="entry name" value="RimP_C_sf"/>
</dbReference>
<dbReference type="InterPro" id="IPR028989">
    <property type="entry name" value="RimP_N"/>
</dbReference>
<dbReference type="InterPro" id="IPR035956">
    <property type="entry name" value="RimP_N_sf"/>
</dbReference>
<dbReference type="NCBIfam" id="NF000927">
    <property type="entry name" value="PRK00092.1-1"/>
    <property type="match status" value="1"/>
</dbReference>
<dbReference type="PANTHER" id="PTHR33867">
    <property type="entry name" value="RIBOSOME MATURATION FACTOR RIMP"/>
    <property type="match status" value="1"/>
</dbReference>
<dbReference type="PANTHER" id="PTHR33867:SF1">
    <property type="entry name" value="RIBOSOME MATURATION FACTOR RIMP"/>
    <property type="match status" value="1"/>
</dbReference>
<dbReference type="Pfam" id="PF17384">
    <property type="entry name" value="DUF150_C"/>
    <property type="match status" value="1"/>
</dbReference>
<dbReference type="Pfam" id="PF02576">
    <property type="entry name" value="RimP_N"/>
    <property type="match status" value="1"/>
</dbReference>
<dbReference type="SUPFAM" id="SSF74942">
    <property type="entry name" value="YhbC-like, C-terminal domain"/>
    <property type="match status" value="1"/>
</dbReference>
<dbReference type="SUPFAM" id="SSF75420">
    <property type="entry name" value="YhbC-like, N-terminal domain"/>
    <property type="match status" value="1"/>
</dbReference>
<evidence type="ECO:0000255" key="1">
    <source>
        <dbReference type="HAMAP-Rule" id="MF_01077"/>
    </source>
</evidence>
<comment type="function">
    <text evidence="1">Required for maturation of 30S ribosomal subunits.</text>
</comment>
<comment type="subcellular location">
    <subcellularLocation>
        <location evidence="1">Cytoplasm</location>
    </subcellularLocation>
</comment>
<comment type="similarity">
    <text evidence="1">Belongs to the RimP family.</text>
</comment>
<accession>A1WXV3</accession>
<protein>
    <recommendedName>
        <fullName evidence="1">Ribosome maturation factor RimP</fullName>
    </recommendedName>
</protein>
<name>RIMP_HALHL</name>
<sequence length="151" mass="16844">MSQIQTLHSLLEPTVTGLGYELVGVELTGAKGNRTLRVYIDTPAGIRLEDCEAVSHQVSGLLDVEDPIEGAYNLEVSSPGLDRPIFKSADYDRFSGERIKLRLLELYEGRRRVKGVLLGLDGEFVRVRDVDGVELRIPLELIDRARLDLEP</sequence>
<keyword id="KW-0963">Cytoplasm</keyword>
<keyword id="KW-1185">Reference proteome</keyword>
<keyword id="KW-0690">Ribosome biogenesis</keyword>
<gene>
    <name evidence="1" type="primary">rimP</name>
    <name type="ordered locus">Hhal_1751</name>
</gene>